<evidence type="ECO:0000255" key="1">
    <source>
        <dbReference type="HAMAP-Rule" id="MF_02101"/>
    </source>
</evidence>
<organism>
    <name type="scientific">Synechococcus sp. (strain RCC307)</name>
    <dbReference type="NCBI Taxonomy" id="316278"/>
    <lineage>
        <taxon>Bacteria</taxon>
        <taxon>Bacillati</taxon>
        <taxon>Cyanobacteriota</taxon>
        <taxon>Cyanophyceae</taxon>
        <taxon>Synechococcales</taxon>
        <taxon>Synechococcaceae</taxon>
        <taxon>Synechococcus</taxon>
    </lineage>
</organism>
<keyword id="KW-0378">Hydrolase</keyword>
<keyword id="KW-1185">Reference proteome</keyword>
<reference key="1">
    <citation type="submission" date="2006-05" db="EMBL/GenBank/DDBJ databases">
        <authorList>
            <consortium name="Genoscope"/>
        </authorList>
    </citation>
    <scope>NUCLEOTIDE SEQUENCE [LARGE SCALE GENOMIC DNA]</scope>
    <source>
        <strain>RCC307</strain>
    </source>
</reference>
<comment type="function">
    <text evidence="1">Catalyzes the hydrolysis of 1,4-dihydroxy-2-naphthoyl-CoA (DHNA-CoA) to 1,4-dihydroxy-2-naphthoate (DHNA), a reaction involved in phylloquinone (vitamin K1) biosynthesis.</text>
</comment>
<comment type="catalytic activity">
    <reaction evidence="1">
        <text>1,4-dihydroxy-2-naphthoyl-CoA + H2O = 1,4-dihydroxy-2-naphthoate + CoA + H(+)</text>
        <dbReference type="Rhea" id="RHEA:26309"/>
        <dbReference type="ChEBI" id="CHEBI:11173"/>
        <dbReference type="ChEBI" id="CHEBI:15377"/>
        <dbReference type="ChEBI" id="CHEBI:15378"/>
        <dbReference type="ChEBI" id="CHEBI:57287"/>
        <dbReference type="ChEBI" id="CHEBI:58897"/>
        <dbReference type="EC" id="3.1.2.28"/>
    </reaction>
</comment>
<comment type="pathway">
    <text evidence="1">Cofactor biosynthesis; phylloquinone biosynthesis.</text>
</comment>
<comment type="pathway">
    <text evidence="1">Quinol/quinone metabolism; 1,4-dihydroxy-2-naphthoate biosynthesis; 1,4-dihydroxy-2-naphthoate from chorismate: step 7/7.</text>
</comment>
<comment type="similarity">
    <text evidence="1">Belongs to the 4-hydroxybenzoyl-CoA thioesterase family. DHNA-CoA hydrolase subfamily.</text>
</comment>
<accession>A5GWA0</accession>
<name>DNCH_SYNR3</name>
<sequence length="131" mass="14513">MRFGETDAAGVLHFQQLLRWCHEAYEESLERFGLEPATLFPTPGQQLNLLLPITHCSADFLAPLICGDPLAIALTPQWLDPTAFEVAYSFSSAGRPVARGLTRHQCIAAADRRRAPLPEGVQRWLQASVQT</sequence>
<proteinExistence type="inferred from homology"/>
<dbReference type="EC" id="3.1.2.28" evidence="1"/>
<dbReference type="EMBL" id="CT978603">
    <property type="protein sequence ID" value="CAK29159.1"/>
    <property type="molecule type" value="Genomic_DNA"/>
</dbReference>
<dbReference type="SMR" id="A5GWA0"/>
<dbReference type="STRING" id="316278.SynRCC307_2256"/>
<dbReference type="KEGG" id="syr:SynRCC307_2256"/>
<dbReference type="eggNOG" id="COG0824">
    <property type="taxonomic scope" value="Bacteria"/>
</dbReference>
<dbReference type="HOGENOM" id="CLU_101141_5_3_3"/>
<dbReference type="UniPathway" id="UPA00995"/>
<dbReference type="UniPathway" id="UPA01057">
    <property type="reaction ID" value="UER01033"/>
</dbReference>
<dbReference type="Proteomes" id="UP000001115">
    <property type="component" value="Chromosome"/>
</dbReference>
<dbReference type="GO" id="GO:0061522">
    <property type="term" value="F:1,4-dihydroxy-2-naphthoyl-CoA thioesterase activity"/>
    <property type="evidence" value="ECO:0007669"/>
    <property type="project" value="UniProtKB-EC"/>
</dbReference>
<dbReference type="GO" id="GO:0042372">
    <property type="term" value="P:phylloquinone biosynthetic process"/>
    <property type="evidence" value="ECO:0007669"/>
    <property type="project" value="UniProtKB-UniRule"/>
</dbReference>
<dbReference type="CDD" id="cd00586">
    <property type="entry name" value="4HBT"/>
    <property type="match status" value="1"/>
</dbReference>
<dbReference type="Gene3D" id="3.10.129.10">
    <property type="entry name" value="Hotdog Thioesterase"/>
    <property type="match status" value="1"/>
</dbReference>
<dbReference type="HAMAP" id="MF_02101">
    <property type="entry name" value="DHNA_CoA_hydrolase"/>
    <property type="match status" value="1"/>
</dbReference>
<dbReference type="InterPro" id="IPR022829">
    <property type="entry name" value="DHNA_CoA_hydrolase"/>
</dbReference>
<dbReference type="InterPro" id="IPR029069">
    <property type="entry name" value="HotDog_dom_sf"/>
</dbReference>
<dbReference type="Pfam" id="PF13279">
    <property type="entry name" value="4HBT_2"/>
    <property type="match status" value="1"/>
</dbReference>
<dbReference type="SUPFAM" id="SSF54637">
    <property type="entry name" value="Thioesterase/thiol ester dehydrase-isomerase"/>
    <property type="match status" value="1"/>
</dbReference>
<feature type="chain" id="PRO_0000377033" description="1,4-dihydroxy-2-naphthoyl-CoA hydrolase">
    <location>
        <begin position="1"/>
        <end position="131"/>
    </location>
</feature>
<feature type="active site" evidence="1">
    <location>
        <position position="7"/>
    </location>
</feature>
<gene>
    <name type="ordered locus">SynRCC307_2256</name>
</gene>
<protein>
    <recommendedName>
        <fullName evidence="1">1,4-dihydroxy-2-naphthoyl-CoA hydrolase</fullName>
        <shortName evidence="1">DHNA-CoA hydrolase</shortName>
        <ecNumber evidence="1">3.1.2.28</ecNumber>
    </recommendedName>
    <alternativeName>
        <fullName evidence="1">DHNA-CoA thioesterase</fullName>
    </alternativeName>
</protein>